<proteinExistence type="inferred from homology"/>
<evidence type="ECO:0000255" key="1">
    <source>
        <dbReference type="HAMAP-Rule" id="MF_01659"/>
    </source>
</evidence>
<evidence type="ECO:0000256" key="2">
    <source>
        <dbReference type="SAM" id="MobiDB-lite"/>
    </source>
</evidence>
<name>MEND_HALHL</name>
<accession>A1WW41</accession>
<comment type="function">
    <text evidence="1">Catalyzes the thiamine diphosphate-dependent decarboxylation of 2-oxoglutarate and the subsequent addition of the resulting succinic semialdehyde-thiamine pyrophosphate anion to isochorismate to yield 2-succinyl-5-enolpyruvyl-6-hydroxy-3-cyclohexene-1-carboxylate (SEPHCHC).</text>
</comment>
<comment type="catalytic activity">
    <reaction evidence="1">
        <text>isochorismate + 2-oxoglutarate + H(+) = 5-enolpyruvoyl-6-hydroxy-2-succinyl-cyclohex-3-ene-1-carboxylate + CO2</text>
        <dbReference type="Rhea" id="RHEA:25593"/>
        <dbReference type="ChEBI" id="CHEBI:15378"/>
        <dbReference type="ChEBI" id="CHEBI:16526"/>
        <dbReference type="ChEBI" id="CHEBI:16810"/>
        <dbReference type="ChEBI" id="CHEBI:29780"/>
        <dbReference type="ChEBI" id="CHEBI:58818"/>
        <dbReference type="EC" id="2.2.1.9"/>
    </reaction>
</comment>
<comment type="cofactor">
    <cofactor evidence="1">
        <name>Mg(2+)</name>
        <dbReference type="ChEBI" id="CHEBI:18420"/>
    </cofactor>
    <cofactor evidence="1">
        <name>Mn(2+)</name>
        <dbReference type="ChEBI" id="CHEBI:29035"/>
    </cofactor>
</comment>
<comment type="cofactor">
    <cofactor evidence="1">
        <name>thiamine diphosphate</name>
        <dbReference type="ChEBI" id="CHEBI:58937"/>
    </cofactor>
    <text evidence="1">Binds 1 thiamine pyrophosphate per subunit.</text>
</comment>
<comment type="pathway">
    <text evidence="1">Quinol/quinone metabolism; 1,4-dihydroxy-2-naphthoate biosynthesis; 1,4-dihydroxy-2-naphthoate from chorismate: step 2/7.</text>
</comment>
<comment type="pathway">
    <text evidence="1">Quinol/quinone metabolism; menaquinone biosynthesis.</text>
</comment>
<comment type="subunit">
    <text evidence="1">Homodimer.</text>
</comment>
<comment type="similarity">
    <text evidence="1">Belongs to the TPP enzyme family. MenD subfamily.</text>
</comment>
<keyword id="KW-0460">Magnesium</keyword>
<keyword id="KW-0464">Manganese</keyword>
<keyword id="KW-0474">Menaquinone biosynthesis</keyword>
<keyword id="KW-0479">Metal-binding</keyword>
<keyword id="KW-1185">Reference proteome</keyword>
<keyword id="KW-0786">Thiamine pyrophosphate</keyword>
<keyword id="KW-0808">Transferase</keyword>
<organism>
    <name type="scientific">Halorhodospira halophila (strain DSM 244 / SL1)</name>
    <name type="common">Ectothiorhodospira halophila (strain DSM 244 / SL1)</name>
    <dbReference type="NCBI Taxonomy" id="349124"/>
    <lineage>
        <taxon>Bacteria</taxon>
        <taxon>Pseudomonadati</taxon>
        <taxon>Pseudomonadota</taxon>
        <taxon>Gammaproteobacteria</taxon>
        <taxon>Chromatiales</taxon>
        <taxon>Ectothiorhodospiraceae</taxon>
        <taxon>Halorhodospira</taxon>
    </lineage>
</organism>
<sequence length="557" mass="58624">MRTEDLNATWAGSLLDRLRGHGVHDVCIAPGSRSAPLALAAARRADRGDDLTLHTHFDERGLAFYALGLIRASRRPVAVITTSGTAAPNLHPAVAEARQSSLPLVVITADRPPELHHCGANQAMPQEDLFAPLVRAALALPPPEATLCGHWLNRRLDATLAEATGAGATGPIHLNVPLREPLYGGTEHPPVAPPLPPRRAPRAAAPPLGPAEPPQLFVAGGLNPEEAEAVLETAAAGNIPILADPSSQLRLRAHPCILGGAEHLLATAAGRAALGQARQVVQFGGRLTGRRLPAWLTEHAPQRWLITGDDHDLDPDWQATTVQADIATAARALRPAAPQPPLPGLTEALTRVAETRSAALANEPFAEPAATERLSRTLPPGMALFAGNSLPIRAVDLFAVAKHGNPCVTQRGVSGIDGLIATAAGFAHHHPDGVTLVIGDLSALHDLNSLALLDQARHTCVVVVLNNDGGGIFDLLPARSEGDDAHRRLFRMPHGYGFSQAAAQFRLPYWQCTDGDSLEAAHREACTRPGGSVIEVACPPGAGSEQMANLFRTLEAL</sequence>
<dbReference type="EC" id="2.2.1.9" evidence="1"/>
<dbReference type="EMBL" id="CP000544">
    <property type="protein sequence ID" value="ABM61903.1"/>
    <property type="molecule type" value="Genomic_DNA"/>
</dbReference>
<dbReference type="RefSeq" id="WP_011813926.1">
    <property type="nucleotide sequence ID" value="NC_008789.1"/>
</dbReference>
<dbReference type="SMR" id="A1WW41"/>
<dbReference type="STRING" id="349124.Hhal_1127"/>
<dbReference type="KEGG" id="hha:Hhal_1127"/>
<dbReference type="eggNOG" id="COG1165">
    <property type="taxonomic scope" value="Bacteria"/>
</dbReference>
<dbReference type="HOGENOM" id="CLU_006051_3_0_6"/>
<dbReference type="OrthoDB" id="9791859at2"/>
<dbReference type="UniPathway" id="UPA00079"/>
<dbReference type="UniPathway" id="UPA01057">
    <property type="reaction ID" value="UER00164"/>
</dbReference>
<dbReference type="Proteomes" id="UP000000647">
    <property type="component" value="Chromosome"/>
</dbReference>
<dbReference type="GO" id="GO:0070204">
    <property type="term" value="F:2-succinyl-5-enolpyruvyl-6-hydroxy-3-cyclohexene-1-carboxylic-acid synthase activity"/>
    <property type="evidence" value="ECO:0007669"/>
    <property type="project" value="UniProtKB-UniRule"/>
</dbReference>
<dbReference type="GO" id="GO:0000287">
    <property type="term" value="F:magnesium ion binding"/>
    <property type="evidence" value="ECO:0007669"/>
    <property type="project" value="UniProtKB-UniRule"/>
</dbReference>
<dbReference type="GO" id="GO:0030145">
    <property type="term" value="F:manganese ion binding"/>
    <property type="evidence" value="ECO:0007669"/>
    <property type="project" value="UniProtKB-UniRule"/>
</dbReference>
<dbReference type="GO" id="GO:0030976">
    <property type="term" value="F:thiamine pyrophosphate binding"/>
    <property type="evidence" value="ECO:0007669"/>
    <property type="project" value="UniProtKB-UniRule"/>
</dbReference>
<dbReference type="GO" id="GO:0009234">
    <property type="term" value="P:menaquinone biosynthetic process"/>
    <property type="evidence" value="ECO:0007669"/>
    <property type="project" value="UniProtKB-UniRule"/>
</dbReference>
<dbReference type="CDD" id="cd07037">
    <property type="entry name" value="TPP_PYR_MenD"/>
    <property type="match status" value="1"/>
</dbReference>
<dbReference type="CDD" id="cd02009">
    <property type="entry name" value="TPP_SHCHC_synthase"/>
    <property type="match status" value="1"/>
</dbReference>
<dbReference type="Gene3D" id="3.40.50.970">
    <property type="match status" value="2"/>
</dbReference>
<dbReference type="Gene3D" id="3.40.50.1220">
    <property type="entry name" value="TPP-binding domain"/>
    <property type="match status" value="1"/>
</dbReference>
<dbReference type="HAMAP" id="MF_01659">
    <property type="entry name" value="MenD"/>
    <property type="match status" value="1"/>
</dbReference>
<dbReference type="InterPro" id="IPR029035">
    <property type="entry name" value="DHS-like_NAD/FAD-binding_dom"/>
</dbReference>
<dbReference type="InterPro" id="IPR004433">
    <property type="entry name" value="MenaQ_synth_MenD"/>
</dbReference>
<dbReference type="InterPro" id="IPR032264">
    <property type="entry name" value="MenD_middle"/>
</dbReference>
<dbReference type="InterPro" id="IPR029061">
    <property type="entry name" value="THDP-binding"/>
</dbReference>
<dbReference type="InterPro" id="IPR012001">
    <property type="entry name" value="Thiamin_PyroP_enz_TPP-bd_dom"/>
</dbReference>
<dbReference type="InterPro" id="IPR011766">
    <property type="entry name" value="TPP_enzyme_TPP-bd"/>
</dbReference>
<dbReference type="NCBIfam" id="TIGR00173">
    <property type="entry name" value="menD"/>
    <property type="match status" value="1"/>
</dbReference>
<dbReference type="PANTHER" id="PTHR42916">
    <property type="entry name" value="2-SUCCINYL-5-ENOLPYRUVYL-6-HYDROXY-3-CYCLOHEXENE-1-CARBOXYLATE SYNTHASE"/>
    <property type="match status" value="1"/>
</dbReference>
<dbReference type="PANTHER" id="PTHR42916:SF1">
    <property type="entry name" value="PROTEIN PHYLLO, CHLOROPLASTIC"/>
    <property type="match status" value="1"/>
</dbReference>
<dbReference type="Pfam" id="PF02775">
    <property type="entry name" value="TPP_enzyme_C"/>
    <property type="match status" value="1"/>
</dbReference>
<dbReference type="Pfam" id="PF16582">
    <property type="entry name" value="TPP_enzyme_M_2"/>
    <property type="match status" value="1"/>
</dbReference>
<dbReference type="Pfam" id="PF02776">
    <property type="entry name" value="TPP_enzyme_N"/>
    <property type="match status" value="1"/>
</dbReference>
<dbReference type="PIRSF" id="PIRSF004983">
    <property type="entry name" value="MenD"/>
    <property type="match status" value="1"/>
</dbReference>
<dbReference type="SUPFAM" id="SSF52467">
    <property type="entry name" value="DHS-like NAD/FAD-binding domain"/>
    <property type="match status" value="1"/>
</dbReference>
<dbReference type="SUPFAM" id="SSF52518">
    <property type="entry name" value="Thiamin diphosphate-binding fold (THDP-binding)"/>
    <property type="match status" value="2"/>
</dbReference>
<feature type="chain" id="PRO_0000341758" description="2-succinyl-5-enolpyruvyl-6-hydroxy-3-cyclohexene-1-carboxylate synthase">
    <location>
        <begin position="1"/>
        <end position="557"/>
    </location>
</feature>
<feature type="region of interest" description="Disordered" evidence="2">
    <location>
        <begin position="183"/>
        <end position="206"/>
    </location>
</feature>
<protein>
    <recommendedName>
        <fullName evidence="1">2-succinyl-5-enolpyruvyl-6-hydroxy-3-cyclohexene-1-carboxylate synthase</fullName>
        <shortName evidence="1">SEPHCHC synthase</shortName>
        <ecNumber evidence="1">2.2.1.9</ecNumber>
    </recommendedName>
    <alternativeName>
        <fullName evidence="1">Menaquinone biosynthesis protein MenD</fullName>
    </alternativeName>
</protein>
<gene>
    <name evidence="1" type="primary">menD</name>
    <name type="ordered locus">Hhal_1127</name>
</gene>
<reference key="1">
    <citation type="submission" date="2006-12" db="EMBL/GenBank/DDBJ databases">
        <title>Complete sequence of Halorhodospira halophila SL1.</title>
        <authorList>
            <consortium name="US DOE Joint Genome Institute"/>
            <person name="Copeland A."/>
            <person name="Lucas S."/>
            <person name="Lapidus A."/>
            <person name="Barry K."/>
            <person name="Detter J.C."/>
            <person name="Glavina del Rio T."/>
            <person name="Hammon N."/>
            <person name="Israni S."/>
            <person name="Dalin E."/>
            <person name="Tice H."/>
            <person name="Pitluck S."/>
            <person name="Saunders E."/>
            <person name="Brettin T."/>
            <person name="Bruce D."/>
            <person name="Han C."/>
            <person name="Tapia R."/>
            <person name="Schmutz J."/>
            <person name="Larimer F."/>
            <person name="Land M."/>
            <person name="Hauser L."/>
            <person name="Kyrpides N."/>
            <person name="Mikhailova N."/>
            <person name="Hoff W."/>
            <person name="Richardson P."/>
        </authorList>
    </citation>
    <scope>NUCLEOTIDE SEQUENCE [LARGE SCALE GENOMIC DNA]</scope>
    <source>
        <strain>DSM 244 / SL1</strain>
    </source>
</reference>